<gene>
    <name evidence="1" type="primary">rsmH</name>
    <name type="synonym">mraW</name>
    <name type="ordered locus">YPDSF_3095</name>
</gene>
<organism>
    <name type="scientific">Yersinia pestis (strain Pestoides F)</name>
    <dbReference type="NCBI Taxonomy" id="386656"/>
    <lineage>
        <taxon>Bacteria</taxon>
        <taxon>Pseudomonadati</taxon>
        <taxon>Pseudomonadota</taxon>
        <taxon>Gammaproteobacteria</taxon>
        <taxon>Enterobacterales</taxon>
        <taxon>Yersiniaceae</taxon>
        <taxon>Yersinia</taxon>
    </lineage>
</organism>
<reference key="1">
    <citation type="submission" date="2007-02" db="EMBL/GenBank/DDBJ databases">
        <title>Complete sequence of chromosome of Yersinia pestis Pestoides F.</title>
        <authorList>
            <consortium name="US DOE Joint Genome Institute"/>
            <person name="Copeland A."/>
            <person name="Lucas S."/>
            <person name="Lapidus A."/>
            <person name="Barry K."/>
            <person name="Detter J.C."/>
            <person name="Glavina del Rio T."/>
            <person name="Hammon N."/>
            <person name="Israni S."/>
            <person name="Dalin E."/>
            <person name="Tice H."/>
            <person name="Pitluck S."/>
            <person name="Di Bartolo G."/>
            <person name="Chain P."/>
            <person name="Malfatti S."/>
            <person name="Shin M."/>
            <person name="Vergez L."/>
            <person name="Schmutz J."/>
            <person name="Larimer F."/>
            <person name="Land M."/>
            <person name="Hauser L."/>
            <person name="Worsham P."/>
            <person name="Chu M."/>
            <person name="Bearden S."/>
            <person name="Garcia E."/>
            <person name="Richardson P."/>
        </authorList>
    </citation>
    <scope>NUCLEOTIDE SEQUENCE [LARGE SCALE GENOMIC DNA]</scope>
    <source>
        <strain>Pestoides F</strain>
    </source>
</reference>
<name>RSMH_YERPP</name>
<proteinExistence type="inferred from homology"/>
<accession>A4TQ91</accession>
<dbReference type="EC" id="2.1.1.199" evidence="1"/>
<dbReference type="EMBL" id="CP000668">
    <property type="protein sequence ID" value="ABP41453.1"/>
    <property type="molecule type" value="Genomic_DNA"/>
</dbReference>
<dbReference type="RefSeq" id="WP_011906410.1">
    <property type="nucleotide sequence ID" value="NZ_CP009715.1"/>
</dbReference>
<dbReference type="SMR" id="A4TQ91"/>
<dbReference type="KEGG" id="ypp:YPDSF_3095"/>
<dbReference type="PATRIC" id="fig|386656.14.peg.1265"/>
<dbReference type="GO" id="GO:0005737">
    <property type="term" value="C:cytoplasm"/>
    <property type="evidence" value="ECO:0007669"/>
    <property type="project" value="UniProtKB-SubCell"/>
</dbReference>
<dbReference type="GO" id="GO:0071424">
    <property type="term" value="F:rRNA (cytosine-N4-)-methyltransferase activity"/>
    <property type="evidence" value="ECO:0007669"/>
    <property type="project" value="UniProtKB-UniRule"/>
</dbReference>
<dbReference type="GO" id="GO:0070475">
    <property type="term" value="P:rRNA base methylation"/>
    <property type="evidence" value="ECO:0007669"/>
    <property type="project" value="UniProtKB-UniRule"/>
</dbReference>
<dbReference type="FunFam" id="1.10.150.170:FF:000001">
    <property type="entry name" value="Ribosomal RNA small subunit methyltransferase H"/>
    <property type="match status" value="1"/>
</dbReference>
<dbReference type="Gene3D" id="1.10.150.170">
    <property type="entry name" value="Putative methyltransferase TM0872, insert domain"/>
    <property type="match status" value="1"/>
</dbReference>
<dbReference type="Gene3D" id="3.40.50.150">
    <property type="entry name" value="Vaccinia Virus protein VP39"/>
    <property type="match status" value="1"/>
</dbReference>
<dbReference type="HAMAP" id="MF_01007">
    <property type="entry name" value="16SrRNA_methyltr_H"/>
    <property type="match status" value="1"/>
</dbReference>
<dbReference type="InterPro" id="IPR002903">
    <property type="entry name" value="RsmH"/>
</dbReference>
<dbReference type="InterPro" id="IPR023397">
    <property type="entry name" value="SAM-dep_MeTrfase_MraW_recog"/>
</dbReference>
<dbReference type="InterPro" id="IPR029063">
    <property type="entry name" value="SAM-dependent_MTases_sf"/>
</dbReference>
<dbReference type="NCBIfam" id="TIGR00006">
    <property type="entry name" value="16S rRNA (cytosine(1402)-N(4))-methyltransferase RsmH"/>
    <property type="match status" value="1"/>
</dbReference>
<dbReference type="PANTHER" id="PTHR11265:SF0">
    <property type="entry name" value="12S RRNA N4-METHYLCYTIDINE METHYLTRANSFERASE"/>
    <property type="match status" value="1"/>
</dbReference>
<dbReference type="PANTHER" id="PTHR11265">
    <property type="entry name" value="S-ADENOSYL-METHYLTRANSFERASE MRAW"/>
    <property type="match status" value="1"/>
</dbReference>
<dbReference type="Pfam" id="PF01795">
    <property type="entry name" value="Methyltransf_5"/>
    <property type="match status" value="1"/>
</dbReference>
<dbReference type="PIRSF" id="PIRSF004486">
    <property type="entry name" value="MraW"/>
    <property type="match status" value="1"/>
</dbReference>
<dbReference type="SUPFAM" id="SSF81799">
    <property type="entry name" value="Putative methyltransferase TM0872, insert domain"/>
    <property type="match status" value="1"/>
</dbReference>
<dbReference type="SUPFAM" id="SSF53335">
    <property type="entry name" value="S-adenosyl-L-methionine-dependent methyltransferases"/>
    <property type="match status" value="1"/>
</dbReference>
<feature type="chain" id="PRO_0000387219" description="Ribosomal RNA small subunit methyltransferase H">
    <location>
        <begin position="1"/>
        <end position="318"/>
    </location>
</feature>
<feature type="binding site" evidence="1">
    <location>
        <begin position="42"/>
        <end position="44"/>
    </location>
    <ligand>
        <name>S-adenosyl-L-methionine</name>
        <dbReference type="ChEBI" id="CHEBI:59789"/>
    </ligand>
</feature>
<feature type="binding site" evidence="1">
    <location>
        <position position="62"/>
    </location>
    <ligand>
        <name>S-adenosyl-L-methionine</name>
        <dbReference type="ChEBI" id="CHEBI:59789"/>
    </ligand>
</feature>
<feature type="binding site" evidence="1">
    <location>
        <position position="86"/>
    </location>
    <ligand>
        <name>S-adenosyl-L-methionine</name>
        <dbReference type="ChEBI" id="CHEBI:59789"/>
    </ligand>
</feature>
<feature type="binding site" evidence="1">
    <location>
        <position position="108"/>
    </location>
    <ligand>
        <name>S-adenosyl-L-methionine</name>
        <dbReference type="ChEBI" id="CHEBI:59789"/>
    </ligand>
</feature>
<feature type="binding site" evidence="1">
    <location>
        <position position="115"/>
    </location>
    <ligand>
        <name>S-adenosyl-L-methionine</name>
        <dbReference type="ChEBI" id="CHEBI:59789"/>
    </ligand>
</feature>
<comment type="function">
    <text evidence="1">Specifically methylates the N4 position of cytidine in position 1402 (C1402) of 16S rRNA.</text>
</comment>
<comment type="catalytic activity">
    <reaction evidence="1">
        <text>cytidine(1402) in 16S rRNA + S-adenosyl-L-methionine = N(4)-methylcytidine(1402) in 16S rRNA + S-adenosyl-L-homocysteine + H(+)</text>
        <dbReference type="Rhea" id="RHEA:42928"/>
        <dbReference type="Rhea" id="RHEA-COMP:10286"/>
        <dbReference type="Rhea" id="RHEA-COMP:10287"/>
        <dbReference type="ChEBI" id="CHEBI:15378"/>
        <dbReference type="ChEBI" id="CHEBI:57856"/>
        <dbReference type="ChEBI" id="CHEBI:59789"/>
        <dbReference type="ChEBI" id="CHEBI:74506"/>
        <dbReference type="ChEBI" id="CHEBI:82748"/>
        <dbReference type="EC" id="2.1.1.199"/>
    </reaction>
</comment>
<comment type="subcellular location">
    <subcellularLocation>
        <location evidence="1">Cytoplasm</location>
    </subcellularLocation>
</comment>
<comment type="similarity">
    <text evidence="1">Belongs to the methyltransferase superfamily. RsmH family.</text>
</comment>
<evidence type="ECO:0000255" key="1">
    <source>
        <dbReference type="HAMAP-Rule" id="MF_01007"/>
    </source>
</evidence>
<sequence>MVDNNKTVDNNYKHTSVLLDEAVKGLNIRDNGIYIDGTFGRGGHSRLILSQLGPEGRLIAIDRDPEAIEAAKQITDPRFSIVHGPFSDLAHYVRDLDLVGRIDGILLDLGVSSPQLDDAERGFSFMRDGPLDMRMDPSRGLSAAEWLMKASADDIAWVLKTFGEERFAKRLAKAIVERNLTQPMTRTKELADLIANASPFRDKHPATRSFQAIRIYINSELEEIERALDGAHEVLAPEGRLSVISFHSLEDRIVKNFIRHHSRGPQVPAGLPLTEAQLRSMGGRTLKSVGKMMPGDAEIAENPRARSSVLRFAERIGE</sequence>
<protein>
    <recommendedName>
        <fullName evidence="1">Ribosomal RNA small subunit methyltransferase H</fullName>
        <ecNumber evidence="1">2.1.1.199</ecNumber>
    </recommendedName>
    <alternativeName>
        <fullName evidence="1">16S rRNA m(4)C1402 methyltransferase</fullName>
    </alternativeName>
    <alternativeName>
        <fullName evidence="1">rRNA (cytosine-N(4)-)-methyltransferase RsmH</fullName>
    </alternativeName>
</protein>
<keyword id="KW-0963">Cytoplasm</keyword>
<keyword id="KW-0489">Methyltransferase</keyword>
<keyword id="KW-0698">rRNA processing</keyword>
<keyword id="KW-0949">S-adenosyl-L-methionine</keyword>
<keyword id="KW-0808">Transferase</keyword>